<accession>Q3ITB1</accession>
<keyword id="KW-0238">DNA-binding</keyword>
<keyword id="KW-1185">Reference proteome</keyword>
<keyword id="KW-0677">Repeat</keyword>
<keyword id="KW-0804">Transcription</keyword>
<keyword id="KW-0805">Transcription regulation</keyword>
<reference key="1">
    <citation type="journal article" date="2005" name="Genome Res.">
        <title>Living with two extremes: conclusions from the genome sequence of Natronomonas pharaonis.</title>
        <authorList>
            <person name="Falb M."/>
            <person name="Pfeiffer F."/>
            <person name="Palm P."/>
            <person name="Rodewald K."/>
            <person name="Hickmann V."/>
            <person name="Tittor J."/>
            <person name="Oesterhelt D."/>
        </authorList>
    </citation>
    <scope>NUCLEOTIDE SEQUENCE [LARGE SCALE GENOMIC DNA]</scope>
    <source>
        <strain>ATCC 35678 / DSM 2160 / CIP 103997 / JCM 8858 / NBRC 14720 / NCIMB 2260 / Gabara</strain>
    </source>
</reference>
<evidence type="ECO:0000255" key="1">
    <source>
        <dbReference type="HAMAP-Rule" id="MF_00408"/>
    </source>
</evidence>
<organism>
    <name type="scientific">Natronomonas pharaonis (strain ATCC 35678 / DSM 2160 / CIP 103997 / JCM 8858 / NBRC 14720 / NCIMB 2260 / Gabara)</name>
    <name type="common">Halobacterium pharaonis</name>
    <dbReference type="NCBI Taxonomy" id="348780"/>
    <lineage>
        <taxon>Archaea</taxon>
        <taxon>Methanobacteriati</taxon>
        <taxon>Methanobacteriota</taxon>
        <taxon>Stenosarchaea group</taxon>
        <taxon>Halobacteria</taxon>
        <taxon>Halobacteriales</taxon>
        <taxon>Haloarculaceae</taxon>
        <taxon>Natronomonas</taxon>
    </lineage>
</organism>
<sequence length="187" mass="20409">MQDPKETINIENVVASTGIGQELDLQSVAMDLEGADYDPEQFPGLVYRTQEPKSAALIFRSGKIVCTGAKSTDDVHESLRIVFDKLRDLEIQVDEDPEIVVQNIVTSADLGRNLNLNAIAIGLGLENIEYEPEQFPGLVYRLDDPDVVALLFGSGKLVITGGKEPDDAREAVDKIVSRLEELGLLDG</sequence>
<comment type="function">
    <text evidence="1">General factor that plays a role in the activation of archaeal genes transcribed by RNA polymerase. Binds specifically to the TATA box promoter element which lies close to the position of transcription initiation.</text>
</comment>
<comment type="similarity">
    <text evidence="1">Belongs to the TBP family.</text>
</comment>
<name>TBP_NATPD</name>
<protein>
    <recommendedName>
        <fullName evidence="1">TATA-box-binding protein</fullName>
    </recommendedName>
    <alternativeName>
        <fullName evidence="1">Box A-binding protein</fullName>
        <shortName evidence="1">BAP</shortName>
    </alternativeName>
    <alternativeName>
        <fullName evidence="1">TATA sequence-binding protein</fullName>
        <shortName evidence="1">TBP</shortName>
    </alternativeName>
    <alternativeName>
        <fullName evidence="1">TATA-box factor</fullName>
    </alternativeName>
</protein>
<proteinExistence type="inferred from homology"/>
<dbReference type="EMBL" id="CR936257">
    <property type="protein sequence ID" value="CAI48623.1"/>
    <property type="molecule type" value="Genomic_DNA"/>
</dbReference>
<dbReference type="RefSeq" id="WP_011322259.1">
    <property type="nucleotide sequence ID" value="NC_007426.1"/>
</dbReference>
<dbReference type="SMR" id="Q3ITB1"/>
<dbReference type="STRING" id="348780.NP_1064A"/>
<dbReference type="EnsemblBacteria" id="CAI48623">
    <property type="protein sequence ID" value="CAI48623"/>
    <property type="gene ID" value="NP_1064A"/>
</dbReference>
<dbReference type="GeneID" id="3703229"/>
<dbReference type="KEGG" id="nph:NP_1064A"/>
<dbReference type="eggNOG" id="arCOG01764">
    <property type="taxonomic scope" value="Archaea"/>
</dbReference>
<dbReference type="HOGENOM" id="CLU_060161_4_3_2"/>
<dbReference type="OrthoDB" id="350539at2157"/>
<dbReference type="Proteomes" id="UP000002698">
    <property type="component" value="Chromosome"/>
</dbReference>
<dbReference type="GO" id="GO:0003677">
    <property type="term" value="F:DNA binding"/>
    <property type="evidence" value="ECO:0007669"/>
    <property type="project" value="UniProtKB-KW"/>
</dbReference>
<dbReference type="GO" id="GO:0003700">
    <property type="term" value="F:DNA-binding transcription factor activity"/>
    <property type="evidence" value="ECO:0007669"/>
    <property type="project" value="UniProtKB-UniRule"/>
</dbReference>
<dbReference type="GO" id="GO:0006352">
    <property type="term" value="P:DNA-templated transcription initiation"/>
    <property type="evidence" value="ECO:0007669"/>
    <property type="project" value="InterPro"/>
</dbReference>
<dbReference type="CDD" id="cd04518">
    <property type="entry name" value="TBP_archaea"/>
    <property type="match status" value="1"/>
</dbReference>
<dbReference type="FunFam" id="3.30.310.10:FF:000007">
    <property type="entry name" value="TATA-box-binding protein"/>
    <property type="match status" value="1"/>
</dbReference>
<dbReference type="FunFam" id="3.30.310.10:FF:000010">
    <property type="entry name" value="TATA-box-binding protein"/>
    <property type="match status" value="1"/>
</dbReference>
<dbReference type="Gene3D" id="3.30.310.10">
    <property type="entry name" value="TATA-Binding Protein"/>
    <property type="match status" value="2"/>
</dbReference>
<dbReference type="HAMAP" id="MF_00408">
    <property type="entry name" value="TATA_bind_prot_arch"/>
    <property type="match status" value="1"/>
</dbReference>
<dbReference type="InterPro" id="IPR000814">
    <property type="entry name" value="TBP"/>
</dbReference>
<dbReference type="InterPro" id="IPR033711">
    <property type="entry name" value="TBP_archaea"/>
</dbReference>
<dbReference type="InterPro" id="IPR012295">
    <property type="entry name" value="TBP_dom_sf"/>
</dbReference>
<dbReference type="NCBIfam" id="NF001593">
    <property type="entry name" value="PRK00394.1-2"/>
    <property type="match status" value="1"/>
</dbReference>
<dbReference type="NCBIfam" id="NF001595">
    <property type="entry name" value="PRK00394.1-5"/>
    <property type="match status" value="1"/>
</dbReference>
<dbReference type="NCBIfam" id="NF001597">
    <property type="entry name" value="PRK00394.2-2"/>
    <property type="match status" value="1"/>
</dbReference>
<dbReference type="PANTHER" id="PTHR10126">
    <property type="entry name" value="TATA-BOX BINDING PROTEIN"/>
    <property type="match status" value="1"/>
</dbReference>
<dbReference type="Pfam" id="PF00352">
    <property type="entry name" value="TBP"/>
    <property type="match status" value="2"/>
</dbReference>
<dbReference type="PRINTS" id="PR00686">
    <property type="entry name" value="TIFACTORIID"/>
</dbReference>
<dbReference type="SUPFAM" id="SSF55945">
    <property type="entry name" value="TATA-box binding protein-like"/>
    <property type="match status" value="2"/>
</dbReference>
<dbReference type="PROSITE" id="PS00351">
    <property type="entry name" value="TFIID"/>
    <property type="match status" value="1"/>
</dbReference>
<feature type="chain" id="PRO_1000049885" description="TATA-box-binding protein">
    <location>
        <begin position="1"/>
        <end position="187"/>
    </location>
</feature>
<feature type="repeat" description="1">
    <location>
        <begin position="10"/>
        <end position="86"/>
    </location>
</feature>
<feature type="repeat" description="2">
    <location>
        <begin position="101"/>
        <end position="179"/>
    </location>
</feature>
<gene>
    <name evidence="1" type="primary">tbp</name>
    <name type="ordered locus">NP_1064A</name>
</gene>